<gene>
    <name type="primary">tmem161</name>
    <name type="ORF">TEgg031b04.1</name>
</gene>
<protein>
    <recommendedName>
        <fullName>Transmembrane protein 161A</fullName>
    </recommendedName>
</protein>
<keyword id="KW-0025">Alternative splicing</keyword>
<keyword id="KW-0325">Glycoprotein</keyword>
<keyword id="KW-0472">Membrane</keyword>
<keyword id="KW-1185">Reference proteome</keyword>
<keyword id="KW-0732">Signal</keyword>
<keyword id="KW-0812">Transmembrane</keyword>
<keyword id="KW-1133">Transmembrane helix</keyword>
<evidence type="ECO:0000250" key="1"/>
<evidence type="ECO:0000255" key="2"/>
<evidence type="ECO:0000256" key="3">
    <source>
        <dbReference type="SAM" id="MobiDB-lite"/>
    </source>
</evidence>
<evidence type="ECO:0000303" key="4">
    <source ref="2"/>
</evidence>
<evidence type="ECO:0000305" key="5"/>
<feature type="signal peptide" evidence="2">
    <location>
        <begin position="1"/>
        <end position="23"/>
    </location>
</feature>
<feature type="chain" id="PRO_0000288088" description="Transmembrane protein 161A">
    <location>
        <begin position="24"/>
        <end position="489"/>
    </location>
</feature>
<feature type="topological domain" description="Extracellular" evidence="2">
    <location>
        <begin position="24"/>
        <end position="98"/>
    </location>
</feature>
<feature type="transmembrane region" description="Helical" evidence="2">
    <location>
        <begin position="99"/>
        <end position="119"/>
    </location>
</feature>
<feature type="topological domain" description="Cytoplasmic" evidence="2">
    <location>
        <begin position="120"/>
        <end position="134"/>
    </location>
</feature>
<feature type="transmembrane region" description="Helical" evidence="2">
    <location>
        <begin position="135"/>
        <end position="155"/>
    </location>
</feature>
<feature type="topological domain" description="Extracellular" evidence="2">
    <location>
        <begin position="156"/>
        <end position="166"/>
    </location>
</feature>
<feature type="transmembrane region" description="Helical" evidence="2">
    <location>
        <begin position="167"/>
        <end position="187"/>
    </location>
</feature>
<feature type="topological domain" description="Cytoplasmic" evidence="2">
    <location>
        <begin position="188"/>
        <end position="224"/>
    </location>
</feature>
<feature type="transmembrane region" description="Helical" evidence="2">
    <location>
        <begin position="225"/>
        <end position="245"/>
    </location>
</feature>
<feature type="topological domain" description="Extracellular" evidence="2">
    <location>
        <begin position="246"/>
        <end position="264"/>
    </location>
</feature>
<feature type="transmembrane region" description="Helical" evidence="2">
    <location>
        <begin position="265"/>
        <end position="285"/>
    </location>
</feature>
<feature type="topological domain" description="Cytoplasmic" evidence="2">
    <location>
        <begin position="286"/>
        <end position="304"/>
    </location>
</feature>
<feature type="transmembrane region" description="Helical" evidence="2">
    <location>
        <begin position="305"/>
        <end position="325"/>
    </location>
</feature>
<feature type="topological domain" description="Extracellular" evidence="2">
    <location>
        <begin position="326"/>
        <end position="366"/>
    </location>
</feature>
<feature type="transmembrane region" description="Helical" evidence="2">
    <location>
        <begin position="367"/>
        <end position="387"/>
    </location>
</feature>
<feature type="topological domain" description="Cytoplasmic" evidence="2">
    <location>
        <begin position="388"/>
        <end position="459"/>
    </location>
</feature>
<feature type="transmembrane region" description="Helical" evidence="2">
    <location>
        <begin position="460"/>
        <end position="480"/>
    </location>
</feature>
<feature type="topological domain" description="Extracellular" evidence="2">
    <location>
        <begin position="481"/>
        <end position="489"/>
    </location>
</feature>
<feature type="region of interest" description="Disordered" evidence="3">
    <location>
        <begin position="51"/>
        <end position="70"/>
    </location>
</feature>
<feature type="region of interest" description="Disordered" evidence="3">
    <location>
        <begin position="413"/>
        <end position="432"/>
    </location>
</feature>
<feature type="glycosylation site" description="N-linked (GlcNAc...) asparagine" evidence="2">
    <location>
        <position position="34"/>
    </location>
</feature>
<feature type="splice variant" id="VSP_025646" description="In isoform 2." evidence="4">
    <location>
        <begin position="96"/>
        <end position="198"/>
    </location>
</feature>
<organism>
    <name type="scientific">Xenopus tropicalis</name>
    <name type="common">Western clawed frog</name>
    <name type="synonym">Silurana tropicalis</name>
    <dbReference type="NCBI Taxonomy" id="8364"/>
    <lineage>
        <taxon>Eukaryota</taxon>
        <taxon>Metazoa</taxon>
        <taxon>Chordata</taxon>
        <taxon>Craniata</taxon>
        <taxon>Vertebrata</taxon>
        <taxon>Euteleostomi</taxon>
        <taxon>Amphibia</taxon>
        <taxon>Batrachia</taxon>
        <taxon>Anura</taxon>
        <taxon>Pipoidea</taxon>
        <taxon>Pipidae</taxon>
        <taxon>Xenopodinae</taxon>
        <taxon>Xenopus</taxon>
        <taxon>Silurana</taxon>
    </lineage>
</organism>
<comment type="function">
    <text evidence="1">May play a role in protection against oxidative stress.</text>
</comment>
<comment type="subcellular location">
    <subcellularLocation>
        <location evidence="5">Membrane</location>
        <topology evidence="5">Multi-pass membrane protein</topology>
    </subcellularLocation>
</comment>
<comment type="alternative products">
    <event type="alternative splicing"/>
    <isoform>
        <id>Q28FG4-1</id>
        <name>1</name>
        <sequence type="displayed"/>
    </isoform>
    <isoform>
        <id>Q28FG4-2</id>
        <name>2</name>
        <sequence type="described" ref="VSP_025646"/>
    </isoform>
</comment>
<comment type="similarity">
    <text evidence="5">Belongs to the TMEM161 family.</text>
</comment>
<dbReference type="EMBL" id="CR761984">
    <property type="protein sequence ID" value="CAJ81447.1"/>
    <property type="molecule type" value="mRNA"/>
</dbReference>
<dbReference type="EMBL" id="BC067964">
    <property type="protein sequence ID" value="AAH67964.1"/>
    <property type="molecule type" value="mRNA"/>
</dbReference>
<dbReference type="RefSeq" id="NP_001001896.2">
    <molecule id="Q28FG4-1"/>
    <property type="nucleotide sequence ID" value="NM_001001896.2"/>
</dbReference>
<dbReference type="FunCoup" id="Q28FG4">
    <property type="interactions" value="560"/>
</dbReference>
<dbReference type="STRING" id="8364.ENSXETP00000027931"/>
<dbReference type="GlyCosmos" id="Q28FG4">
    <property type="glycosylation" value="1 site, No reported glycans"/>
</dbReference>
<dbReference type="PaxDb" id="8364-ENSXETP00000031352"/>
<dbReference type="DNASU" id="431674"/>
<dbReference type="GeneID" id="431674"/>
<dbReference type="KEGG" id="xtr:431674"/>
<dbReference type="AGR" id="Xenbase:XB-GENE-1004051"/>
<dbReference type="CTD" id="54929"/>
<dbReference type="Xenbase" id="XB-GENE-1004051">
    <property type="gene designation" value="tmem161a"/>
</dbReference>
<dbReference type="eggNOG" id="KOG3978">
    <property type="taxonomic scope" value="Eukaryota"/>
</dbReference>
<dbReference type="HOGENOM" id="CLU_027277_0_0_1"/>
<dbReference type="InParanoid" id="Q28FG4"/>
<dbReference type="OMA" id="VIVVLMW"/>
<dbReference type="OrthoDB" id="784140at2759"/>
<dbReference type="PhylomeDB" id="Q28FG4"/>
<dbReference type="TreeFam" id="TF314570"/>
<dbReference type="Proteomes" id="UP000008143">
    <property type="component" value="Chromosome 1"/>
</dbReference>
<dbReference type="Bgee" id="ENSXETG00000014335">
    <property type="expression patterns" value="Expressed in ovary and 14 other cell types or tissues"/>
</dbReference>
<dbReference type="ExpressionAtlas" id="Q28FG4">
    <property type="expression patterns" value="differential"/>
</dbReference>
<dbReference type="GO" id="GO:0016020">
    <property type="term" value="C:membrane"/>
    <property type="evidence" value="ECO:0007669"/>
    <property type="project" value="UniProtKB-SubCell"/>
</dbReference>
<dbReference type="InterPro" id="IPR019395">
    <property type="entry name" value="Transmembrane_161A/B"/>
</dbReference>
<dbReference type="PANTHER" id="PTHR13624">
    <property type="entry name" value="RE42071P"/>
    <property type="match status" value="1"/>
</dbReference>
<dbReference type="PANTHER" id="PTHR13624:SF4">
    <property type="entry name" value="TRANSMEMBRANE PROTEIN 161A"/>
    <property type="match status" value="1"/>
</dbReference>
<dbReference type="Pfam" id="PF10268">
    <property type="entry name" value="Tmemb_161AB"/>
    <property type="match status" value="1"/>
</dbReference>
<accession>Q28FG4</accession>
<accession>Q6NVP1</accession>
<name>T161A_XENTR</name>
<proteinExistence type="evidence at transcript level"/>
<reference key="1">
    <citation type="submission" date="2006-10" db="EMBL/GenBank/DDBJ databases">
        <authorList>
            <consortium name="Sanger Xenopus tropicalis EST/cDNA project"/>
        </authorList>
    </citation>
    <scope>NUCLEOTIDE SEQUENCE [LARGE SCALE MRNA] (ISOFORM 1)</scope>
    <source>
        <tissue>Egg</tissue>
    </source>
</reference>
<reference key="2">
    <citation type="submission" date="2004-03" db="EMBL/GenBank/DDBJ databases">
        <authorList>
            <consortium name="NIH - Xenopus Gene Collection (XGC) project"/>
        </authorList>
    </citation>
    <scope>NUCLEOTIDE SEQUENCE [LARGE SCALE MRNA] (ISOFORM 2)</scope>
    <source>
        <tissue>Embryo</tissue>
    </source>
</reference>
<sequence length="489" mass="56149">MAIMGVQMVVTLLVASIMQRVSPHYSFGRWLLCNGSLFRFKHPTEEELRTLAGKQKPKAKRERRTNGVTDEKPLTVPKDIDLRLDTQPITTIDALVLRYFLEYQWFIDFALYSTIIYLFTEAYYCVVDAQNEINIGVLWCLMSIIFSIKVLFTVMKHYFRSEEGGERSVCLTFAFFFLLIAMIVMVVRDEYLEFGLEPGLASVCHNLENFLAQRGWQWSMPFVKLAFKIALVALCAFLGGCLTFPGLRLAQTHLDALKMAADRPMLQLLLHMSFLPPVIVVVLWIRPITRDFLLNAPMGKESVELMSNSAYNTFRLWIIVVLCLLRFCLTRFHLQAYLCLADRWVEQMKREAGRISMLEIQRKISRIFCYLTVVALQYLAPIVLTFHCVLMLKSLGDYSWGLYPEPTGFTPVVDSSPVQSHSPTSEEEEDTEDVQAAVEQIMGAMSSLRGLFTPLFFRGLFSFLTWWVSVCQIVTSLFGLYFHQYLGAS</sequence>